<gene>
    <name evidence="1" type="primary">rpsG</name>
    <name type="ordered locus">TGRD_078</name>
</gene>
<accession>B1GZ79</accession>
<name>RS7_ENDTX</name>
<sequence length="159" mass="17992">MPRKALKPKEKRGLPEPDSKFGSVQIARFISKLNFEGKKSIAESIMYGSFDIIKERTGEDPVSVFNRALENIRPLLEVRPRRVGGATYQVPMEVPVIRSTTLAINWLIGIARSKTGKPMREKLAQEIIDASKKEGAAVKKREDTHKMAEANKAFAHYRW</sequence>
<proteinExistence type="inferred from homology"/>
<comment type="function">
    <text evidence="1">One of the primary rRNA binding proteins, it binds directly to 16S rRNA where it nucleates assembly of the head domain of the 30S subunit. Is located at the subunit interface close to the decoding center, probably blocks exit of the E-site tRNA.</text>
</comment>
<comment type="subunit">
    <text evidence="1">Part of the 30S ribosomal subunit. Contacts proteins S9 and S11.</text>
</comment>
<comment type="similarity">
    <text evidence="1">Belongs to the universal ribosomal protein uS7 family.</text>
</comment>
<keyword id="KW-0687">Ribonucleoprotein</keyword>
<keyword id="KW-0689">Ribosomal protein</keyword>
<keyword id="KW-0694">RNA-binding</keyword>
<keyword id="KW-0699">rRNA-binding</keyword>
<keyword id="KW-0820">tRNA-binding</keyword>
<protein>
    <recommendedName>
        <fullName evidence="1">Small ribosomal subunit protein uS7</fullName>
    </recommendedName>
    <alternativeName>
        <fullName evidence="2">30S ribosomal protein S7</fullName>
    </alternativeName>
</protein>
<organism>
    <name type="scientific">Endomicrobium trichonymphae</name>
    <dbReference type="NCBI Taxonomy" id="1408204"/>
    <lineage>
        <taxon>Bacteria</taxon>
        <taxon>Pseudomonadati</taxon>
        <taxon>Elusimicrobiota</taxon>
        <taxon>Endomicrobiia</taxon>
        <taxon>Endomicrobiales</taxon>
        <taxon>Endomicrobiaceae</taxon>
        <taxon>Candidatus Endomicrobiellum</taxon>
    </lineage>
</organism>
<reference key="1">
    <citation type="journal article" date="2008" name="Proc. Natl. Acad. Sci. U.S.A.">
        <title>Complete genome of the uncultured termite group 1 bacteria in a single host protist cell.</title>
        <authorList>
            <person name="Hongoh Y."/>
            <person name="Sharma V.K."/>
            <person name="Prakash T."/>
            <person name="Noda S."/>
            <person name="Taylor T.D."/>
            <person name="Kudo T."/>
            <person name="Sakaki Y."/>
            <person name="Toyoda A."/>
            <person name="Hattori M."/>
            <person name="Ohkuma M."/>
        </authorList>
    </citation>
    <scope>NUCLEOTIDE SEQUENCE [LARGE SCALE GENOMIC DNA]</scope>
</reference>
<dbReference type="EMBL" id="AP009510">
    <property type="protein sequence ID" value="BAG13561.1"/>
    <property type="molecule type" value="Genomic_DNA"/>
</dbReference>
<dbReference type="RefSeq" id="WP_015423090.1">
    <property type="nucleotide sequence ID" value="NC_020419.1"/>
</dbReference>
<dbReference type="SMR" id="B1GZ79"/>
<dbReference type="STRING" id="471821.TGRD_078"/>
<dbReference type="KEGG" id="eti:RSTT_063"/>
<dbReference type="KEGG" id="rsd:TGRD_078"/>
<dbReference type="PATRIC" id="fig|471821.5.peg.121"/>
<dbReference type="HOGENOM" id="CLU_072226_1_1_0"/>
<dbReference type="OrthoDB" id="9807653at2"/>
<dbReference type="Proteomes" id="UP000001691">
    <property type="component" value="Chromosome"/>
</dbReference>
<dbReference type="GO" id="GO:0015935">
    <property type="term" value="C:small ribosomal subunit"/>
    <property type="evidence" value="ECO:0007669"/>
    <property type="project" value="InterPro"/>
</dbReference>
<dbReference type="GO" id="GO:0019843">
    <property type="term" value="F:rRNA binding"/>
    <property type="evidence" value="ECO:0007669"/>
    <property type="project" value="UniProtKB-UniRule"/>
</dbReference>
<dbReference type="GO" id="GO:0003735">
    <property type="term" value="F:structural constituent of ribosome"/>
    <property type="evidence" value="ECO:0007669"/>
    <property type="project" value="InterPro"/>
</dbReference>
<dbReference type="GO" id="GO:0000049">
    <property type="term" value="F:tRNA binding"/>
    <property type="evidence" value="ECO:0007669"/>
    <property type="project" value="UniProtKB-UniRule"/>
</dbReference>
<dbReference type="GO" id="GO:0006412">
    <property type="term" value="P:translation"/>
    <property type="evidence" value="ECO:0007669"/>
    <property type="project" value="UniProtKB-UniRule"/>
</dbReference>
<dbReference type="CDD" id="cd14869">
    <property type="entry name" value="uS7_Bacteria"/>
    <property type="match status" value="1"/>
</dbReference>
<dbReference type="FunFam" id="1.10.455.10:FF:000001">
    <property type="entry name" value="30S ribosomal protein S7"/>
    <property type="match status" value="1"/>
</dbReference>
<dbReference type="Gene3D" id="1.10.455.10">
    <property type="entry name" value="Ribosomal protein S7 domain"/>
    <property type="match status" value="1"/>
</dbReference>
<dbReference type="HAMAP" id="MF_00480_B">
    <property type="entry name" value="Ribosomal_uS7_B"/>
    <property type="match status" value="1"/>
</dbReference>
<dbReference type="InterPro" id="IPR000235">
    <property type="entry name" value="Ribosomal_uS7"/>
</dbReference>
<dbReference type="InterPro" id="IPR005717">
    <property type="entry name" value="Ribosomal_uS7_bac/org-type"/>
</dbReference>
<dbReference type="InterPro" id="IPR023798">
    <property type="entry name" value="Ribosomal_uS7_dom"/>
</dbReference>
<dbReference type="InterPro" id="IPR036823">
    <property type="entry name" value="Ribosomal_uS7_dom_sf"/>
</dbReference>
<dbReference type="NCBIfam" id="TIGR01029">
    <property type="entry name" value="rpsG_bact"/>
    <property type="match status" value="1"/>
</dbReference>
<dbReference type="PANTHER" id="PTHR11205">
    <property type="entry name" value="RIBOSOMAL PROTEIN S7"/>
    <property type="match status" value="1"/>
</dbReference>
<dbReference type="Pfam" id="PF00177">
    <property type="entry name" value="Ribosomal_S7"/>
    <property type="match status" value="1"/>
</dbReference>
<dbReference type="PIRSF" id="PIRSF002122">
    <property type="entry name" value="RPS7p_RPS7a_RPS5e_RPS7o"/>
    <property type="match status" value="1"/>
</dbReference>
<dbReference type="SUPFAM" id="SSF47973">
    <property type="entry name" value="Ribosomal protein S7"/>
    <property type="match status" value="1"/>
</dbReference>
<feature type="chain" id="PRO_1000126021" description="Small ribosomal subunit protein uS7">
    <location>
        <begin position="1"/>
        <end position="159"/>
    </location>
</feature>
<evidence type="ECO:0000255" key="1">
    <source>
        <dbReference type="HAMAP-Rule" id="MF_00480"/>
    </source>
</evidence>
<evidence type="ECO:0000305" key="2"/>